<proteinExistence type="inferred from homology"/>
<organism>
    <name type="scientific">Escherichia coli (strain 55989 / EAEC)</name>
    <dbReference type="NCBI Taxonomy" id="585055"/>
    <lineage>
        <taxon>Bacteria</taxon>
        <taxon>Pseudomonadati</taxon>
        <taxon>Pseudomonadota</taxon>
        <taxon>Gammaproteobacteria</taxon>
        <taxon>Enterobacterales</taxon>
        <taxon>Enterobacteriaceae</taxon>
        <taxon>Escherichia</taxon>
    </lineage>
</organism>
<dbReference type="EMBL" id="CU928145">
    <property type="protein sequence ID" value="CAV00820.1"/>
    <property type="molecule type" value="Genomic_DNA"/>
</dbReference>
<dbReference type="RefSeq" id="WP_000896501.1">
    <property type="nucleotide sequence ID" value="NC_011748.1"/>
</dbReference>
<dbReference type="SMR" id="B7L880"/>
<dbReference type="GeneID" id="89518626"/>
<dbReference type="KEGG" id="eck:EC55989_4208"/>
<dbReference type="HOGENOM" id="CLU_050669_0_1_6"/>
<dbReference type="Proteomes" id="UP000000746">
    <property type="component" value="Chromosome"/>
</dbReference>
<dbReference type="GO" id="GO:0005886">
    <property type="term" value="C:plasma membrane"/>
    <property type="evidence" value="ECO:0007669"/>
    <property type="project" value="UniProtKB-SubCell"/>
</dbReference>
<dbReference type="GO" id="GO:0045259">
    <property type="term" value="C:proton-transporting ATP synthase complex"/>
    <property type="evidence" value="ECO:0007669"/>
    <property type="project" value="UniProtKB-KW"/>
</dbReference>
<dbReference type="GO" id="GO:0005524">
    <property type="term" value="F:ATP binding"/>
    <property type="evidence" value="ECO:0007669"/>
    <property type="project" value="UniProtKB-UniRule"/>
</dbReference>
<dbReference type="GO" id="GO:0046933">
    <property type="term" value="F:proton-transporting ATP synthase activity, rotational mechanism"/>
    <property type="evidence" value="ECO:0007669"/>
    <property type="project" value="UniProtKB-UniRule"/>
</dbReference>
<dbReference type="GO" id="GO:0042777">
    <property type="term" value="P:proton motive force-driven plasma membrane ATP synthesis"/>
    <property type="evidence" value="ECO:0007669"/>
    <property type="project" value="UniProtKB-UniRule"/>
</dbReference>
<dbReference type="CDD" id="cd12151">
    <property type="entry name" value="F1-ATPase_gamma"/>
    <property type="match status" value="1"/>
</dbReference>
<dbReference type="FunFam" id="1.10.287.80:FF:000005">
    <property type="entry name" value="ATP synthase gamma chain"/>
    <property type="match status" value="2"/>
</dbReference>
<dbReference type="FunFam" id="3.40.1380.10:FF:000001">
    <property type="entry name" value="ATP synthase gamma chain"/>
    <property type="match status" value="1"/>
</dbReference>
<dbReference type="Gene3D" id="3.40.1380.10">
    <property type="match status" value="1"/>
</dbReference>
<dbReference type="Gene3D" id="1.10.287.80">
    <property type="entry name" value="ATP synthase, gamma subunit, helix hairpin domain"/>
    <property type="match status" value="1"/>
</dbReference>
<dbReference type="HAMAP" id="MF_00815">
    <property type="entry name" value="ATP_synth_gamma_bact"/>
    <property type="match status" value="1"/>
</dbReference>
<dbReference type="InterPro" id="IPR035968">
    <property type="entry name" value="ATP_synth_F1_ATPase_gsu"/>
</dbReference>
<dbReference type="InterPro" id="IPR000131">
    <property type="entry name" value="ATP_synth_F1_gsu"/>
</dbReference>
<dbReference type="InterPro" id="IPR023632">
    <property type="entry name" value="ATP_synth_F1_gsu_CS"/>
</dbReference>
<dbReference type="NCBIfam" id="TIGR01146">
    <property type="entry name" value="ATPsyn_F1gamma"/>
    <property type="match status" value="1"/>
</dbReference>
<dbReference type="NCBIfam" id="NF004144">
    <property type="entry name" value="PRK05621.1-1"/>
    <property type="match status" value="1"/>
</dbReference>
<dbReference type="PANTHER" id="PTHR11693">
    <property type="entry name" value="ATP SYNTHASE GAMMA CHAIN"/>
    <property type="match status" value="1"/>
</dbReference>
<dbReference type="PANTHER" id="PTHR11693:SF22">
    <property type="entry name" value="ATP SYNTHASE SUBUNIT GAMMA, MITOCHONDRIAL"/>
    <property type="match status" value="1"/>
</dbReference>
<dbReference type="Pfam" id="PF00231">
    <property type="entry name" value="ATP-synt"/>
    <property type="match status" value="1"/>
</dbReference>
<dbReference type="PRINTS" id="PR00126">
    <property type="entry name" value="ATPASEGAMMA"/>
</dbReference>
<dbReference type="SUPFAM" id="SSF52943">
    <property type="entry name" value="ATP synthase (F1-ATPase), gamma subunit"/>
    <property type="match status" value="1"/>
</dbReference>
<dbReference type="PROSITE" id="PS00153">
    <property type="entry name" value="ATPASE_GAMMA"/>
    <property type="match status" value="1"/>
</dbReference>
<gene>
    <name evidence="1" type="primary">atpG</name>
    <name type="ordered locus">EC55989_4208</name>
</gene>
<protein>
    <recommendedName>
        <fullName evidence="1">ATP synthase gamma chain</fullName>
    </recommendedName>
    <alternativeName>
        <fullName evidence="1">ATP synthase F1 sector gamma subunit</fullName>
    </alternativeName>
    <alternativeName>
        <fullName evidence="1">F-ATPase gamma subunit</fullName>
    </alternativeName>
</protein>
<comment type="function">
    <text evidence="1">Produces ATP from ADP in the presence of a proton gradient across the membrane. The gamma chain is believed to be important in regulating ATPase activity and the flow of protons through the CF(0) complex.</text>
</comment>
<comment type="subunit">
    <text evidence="1">F-type ATPases have 2 components, CF(1) - the catalytic core - and CF(0) - the membrane proton channel. CF(1) has five subunits: alpha(3), beta(3), gamma(1), delta(1), epsilon(1). CF(0) has three main subunits: a, b and c.</text>
</comment>
<comment type="subcellular location">
    <subcellularLocation>
        <location evidence="1">Cell inner membrane</location>
        <topology evidence="1">Peripheral membrane protein</topology>
    </subcellularLocation>
</comment>
<comment type="similarity">
    <text evidence="1">Belongs to the ATPase gamma chain family.</text>
</comment>
<reference key="1">
    <citation type="journal article" date="2009" name="PLoS Genet.">
        <title>Organised genome dynamics in the Escherichia coli species results in highly diverse adaptive paths.</title>
        <authorList>
            <person name="Touchon M."/>
            <person name="Hoede C."/>
            <person name="Tenaillon O."/>
            <person name="Barbe V."/>
            <person name="Baeriswyl S."/>
            <person name="Bidet P."/>
            <person name="Bingen E."/>
            <person name="Bonacorsi S."/>
            <person name="Bouchier C."/>
            <person name="Bouvet O."/>
            <person name="Calteau A."/>
            <person name="Chiapello H."/>
            <person name="Clermont O."/>
            <person name="Cruveiller S."/>
            <person name="Danchin A."/>
            <person name="Diard M."/>
            <person name="Dossat C."/>
            <person name="Karoui M.E."/>
            <person name="Frapy E."/>
            <person name="Garry L."/>
            <person name="Ghigo J.M."/>
            <person name="Gilles A.M."/>
            <person name="Johnson J."/>
            <person name="Le Bouguenec C."/>
            <person name="Lescat M."/>
            <person name="Mangenot S."/>
            <person name="Martinez-Jehanne V."/>
            <person name="Matic I."/>
            <person name="Nassif X."/>
            <person name="Oztas S."/>
            <person name="Petit M.A."/>
            <person name="Pichon C."/>
            <person name="Rouy Z."/>
            <person name="Ruf C.S."/>
            <person name="Schneider D."/>
            <person name="Tourret J."/>
            <person name="Vacherie B."/>
            <person name="Vallenet D."/>
            <person name="Medigue C."/>
            <person name="Rocha E.P.C."/>
            <person name="Denamur E."/>
        </authorList>
    </citation>
    <scope>NUCLEOTIDE SEQUENCE [LARGE SCALE GENOMIC DNA]</scope>
    <source>
        <strain>55989 / EAEC</strain>
    </source>
</reference>
<evidence type="ECO:0000255" key="1">
    <source>
        <dbReference type="HAMAP-Rule" id="MF_00815"/>
    </source>
</evidence>
<name>ATPG_ECO55</name>
<sequence length="287" mass="31591">MAGAKEIRSKIASVQNTQKITKAMEMVAASKMRKSQDRMAASRPYAETMRKVIGHLAHGNLEYKHPYLEERDVKRVGYLVVSTDRGLCGGLNINLFKKLLAEMKTWTDKGVQCDLAMIGSKGVSFFNSVGGNVVAQVTGMGDNPSLSELIGPVKVMLQAYDEGRLDKLYIVSNKFINTMSQVPTISQLLPLPASDDDDLKHKSWDYLYEPDPKALLDTLLRRYVESQVYQGVVENLASEQAARMVAMKAATDNGGSLIKELQLVYNKARQASITQELTEIVSGAAAV</sequence>
<keyword id="KW-0066">ATP synthesis</keyword>
<keyword id="KW-0997">Cell inner membrane</keyword>
<keyword id="KW-1003">Cell membrane</keyword>
<keyword id="KW-0139">CF(1)</keyword>
<keyword id="KW-0375">Hydrogen ion transport</keyword>
<keyword id="KW-0406">Ion transport</keyword>
<keyword id="KW-0472">Membrane</keyword>
<keyword id="KW-1185">Reference proteome</keyword>
<keyword id="KW-0813">Transport</keyword>
<accession>B7L880</accession>
<feature type="chain" id="PRO_1000148618" description="ATP synthase gamma chain">
    <location>
        <begin position="1"/>
        <end position="287"/>
    </location>
</feature>